<name>HBB_MARFO</name>
<dbReference type="PIR" id="S10599">
    <property type="entry name" value="HBBDBM"/>
</dbReference>
<dbReference type="SMR" id="P68053"/>
<dbReference type="GO" id="GO:0072562">
    <property type="term" value="C:blood microparticle"/>
    <property type="evidence" value="ECO:0007669"/>
    <property type="project" value="TreeGrafter"/>
</dbReference>
<dbReference type="GO" id="GO:0031838">
    <property type="term" value="C:haptoglobin-hemoglobin complex"/>
    <property type="evidence" value="ECO:0007669"/>
    <property type="project" value="TreeGrafter"/>
</dbReference>
<dbReference type="GO" id="GO:0005833">
    <property type="term" value="C:hemoglobin complex"/>
    <property type="evidence" value="ECO:0007669"/>
    <property type="project" value="InterPro"/>
</dbReference>
<dbReference type="GO" id="GO:0031720">
    <property type="term" value="F:haptoglobin binding"/>
    <property type="evidence" value="ECO:0007669"/>
    <property type="project" value="TreeGrafter"/>
</dbReference>
<dbReference type="GO" id="GO:0020037">
    <property type="term" value="F:heme binding"/>
    <property type="evidence" value="ECO:0007669"/>
    <property type="project" value="InterPro"/>
</dbReference>
<dbReference type="GO" id="GO:0031721">
    <property type="term" value="F:hemoglobin alpha binding"/>
    <property type="evidence" value="ECO:0007669"/>
    <property type="project" value="TreeGrafter"/>
</dbReference>
<dbReference type="GO" id="GO:0046872">
    <property type="term" value="F:metal ion binding"/>
    <property type="evidence" value="ECO:0007669"/>
    <property type="project" value="UniProtKB-KW"/>
</dbReference>
<dbReference type="GO" id="GO:0043177">
    <property type="term" value="F:organic acid binding"/>
    <property type="evidence" value="ECO:0007669"/>
    <property type="project" value="TreeGrafter"/>
</dbReference>
<dbReference type="GO" id="GO:0019825">
    <property type="term" value="F:oxygen binding"/>
    <property type="evidence" value="ECO:0007669"/>
    <property type="project" value="InterPro"/>
</dbReference>
<dbReference type="GO" id="GO:0005344">
    <property type="term" value="F:oxygen carrier activity"/>
    <property type="evidence" value="ECO:0007669"/>
    <property type="project" value="UniProtKB-KW"/>
</dbReference>
<dbReference type="GO" id="GO:0004601">
    <property type="term" value="F:peroxidase activity"/>
    <property type="evidence" value="ECO:0007669"/>
    <property type="project" value="TreeGrafter"/>
</dbReference>
<dbReference type="GO" id="GO:0042744">
    <property type="term" value="P:hydrogen peroxide catabolic process"/>
    <property type="evidence" value="ECO:0007669"/>
    <property type="project" value="TreeGrafter"/>
</dbReference>
<dbReference type="CDD" id="cd08925">
    <property type="entry name" value="Hb-beta-like"/>
    <property type="match status" value="1"/>
</dbReference>
<dbReference type="FunFam" id="1.10.490.10:FF:000001">
    <property type="entry name" value="Hemoglobin subunit beta"/>
    <property type="match status" value="1"/>
</dbReference>
<dbReference type="Gene3D" id="1.10.490.10">
    <property type="entry name" value="Globins"/>
    <property type="match status" value="1"/>
</dbReference>
<dbReference type="InterPro" id="IPR000971">
    <property type="entry name" value="Globin"/>
</dbReference>
<dbReference type="InterPro" id="IPR009050">
    <property type="entry name" value="Globin-like_sf"/>
</dbReference>
<dbReference type="InterPro" id="IPR012292">
    <property type="entry name" value="Globin/Proto"/>
</dbReference>
<dbReference type="InterPro" id="IPR002337">
    <property type="entry name" value="Hemoglobin_b"/>
</dbReference>
<dbReference type="InterPro" id="IPR050056">
    <property type="entry name" value="Hemoglobin_oxygen_transport"/>
</dbReference>
<dbReference type="PANTHER" id="PTHR11442">
    <property type="entry name" value="HEMOGLOBIN FAMILY MEMBER"/>
    <property type="match status" value="1"/>
</dbReference>
<dbReference type="PANTHER" id="PTHR11442:SF42">
    <property type="entry name" value="HEMOGLOBIN SUBUNIT BETA"/>
    <property type="match status" value="1"/>
</dbReference>
<dbReference type="Pfam" id="PF00042">
    <property type="entry name" value="Globin"/>
    <property type="match status" value="1"/>
</dbReference>
<dbReference type="PRINTS" id="PR00814">
    <property type="entry name" value="BETAHAEM"/>
</dbReference>
<dbReference type="SUPFAM" id="SSF46458">
    <property type="entry name" value="Globin-like"/>
    <property type="match status" value="1"/>
</dbReference>
<dbReference type="PROSITE" id="PS01033">
    <property type="entry name" value="GLOBIN"/>
    <property type="match status" value="1"/>
</dbReference>
<accession>P68053</accession>
<accession>P10886</accession>
<sequence>VHLTGEEKAAVTALWGKVNVDEVGGEALGRLLVVYPWTQRFFDSFGDLSSPDAVMGNPKVKAHGKKVLNSFSEGLKNLDNLKGTFAKLSELHCDKLHVDPENFKLLGNVLVCVLAHHFGKEFTPQVQAAYQKVVAGVANALAHKYH</sequence>
<organism>
    <name type="scientific">Martes foina</name>
    <name type="common">Beech marten</name>
    <dbReference type="NCBI Taxonomy" id="9659"/>
    <lineage>
        <taxon>Eukaryota</taxon>
        <taxon>Metazoa</taxon>
        <taxon>Chordata</taxon>
        <taxon>Craniata</taxon>
        <taxon>Vertebrata</taxon>
        <taxon>Euteleostomi</taxon>
        <taxon>Mammalia</taxon>
        <taxon>Eutheria</taxon>
        <taxon>Laurasiatheria</taxon>
        <taxon>Carnivora</taxon>
        <taxon>Caniformia</taxon>
        <taxon>Musteloidea</taxon>
        <taxon>Mustelidae</taxon>
        <taxon>Guloninae</taxon>
        <taxon>Martes</taxon>
    </lineage>
</organism>
<feature type="chain" id="PRO_0000053009" description="Hemoglobin subunit beta">
    <location>
        <begin position="1"/>
        <end position="146"/>
    </location>
</feature>
<feature type="domain" description="Globin" evidence="3">
    <location>
        <begin position="2"/>
        <end position="146"/>
    </location>
</feature>
<feature type="binding site" description="distal binding residue">
    <location>
        <position position="63"/>
    </location>
    <ligand>
        <name>heme b</name>
        <dbReference type="ChEBI" id="CHEBI:60344"/>
    </ligand>
    <ligandPart>
        <name>Fe</name>
        <dbReference type="ChEBI" id="CHEBI:18248"/>
    </ligandPart>
</feature>
<feature type="binding site" description="proximal binding residue">
    <location>
        <position position="92"/>
    </location>
    <ligand>
        <name>heme b</name>
        <dbReference type="ChEBI" id="CHEBI:60344"/>
    </ligand>
    <ligandPart>
        <name>Fe</name>
        <dbReference type="ChEBI" id="CHEBI:18248"/>
    </ligandPart>
</feature>
<feature type="modified residue" description="N-acetylvaline" evidence="1">
    <location>
        <position position="1"/>
    </location>
</feature>
<feature type="modified residue" description="Phosphothreonine" evidence="2">
    <location>
        <position position="12"/>
    </location>
</feature>
<feature type="modified residue" description="Phosphoserine" evidence="2">
    <location>
        <position position="44"/>
    </location>
</feature>
<feature type="modified residue" description="N6-acetyllysine" evidence="2">
    <location>
        <position position="59"/>
    </location>
</feature>
<feature type="modified residue" description="N6-acetyllysine" evidence="2">
    <location>
        <position position="82"/>
    </location>
</feature>
<feature type="modified residue" description="S-nitrosocysteine" evidence="2">
    <location>
        <position position="93"/>
    </location>
</feature>
<feature type="modified residue" description="N6-acetyllysine" evidence="2">
    <location>
        <position position="144"/>
    </location>
</feature>
<reference key="1">
    <citation type="journal article" date="1990" name="Biol. Chem. Hoppe-Seyler">
        <title>Carnivora: the primary structure of the beach marten (Martes foina, Mustelidae) hemoglobin.</title>
        <authorList>
            <person name="Ruecknagel K.P."/>
            <person name="Wiesner H."/>
            <person name="Braunitzer G."/>
        </authorList>
    </citation>
    <scope>PROTEIN SEQUENCE</scope>
</reference>
<evidence type="ECO:0000250" key="1">
    <source>
        <dbReference type="UniProtKB" id="P02086"/>
    </source>
</evidence>
<evidence type="ECO:0000250" key="2">
    <source>
        <dbReference type="UniProtKB" id="P68871"/>
    </source>
</evidence>
<evidence type="ECO:0000255" key="3">
    <source>
        <dbReference type="PROSITE-ProRule" id="PRU00238"/>
    </source>
</evidence>
<protein>
    <recommendedName>
        <fullName>Hemoglobin subunit beta</fullName>
    </recommendedName>
    <alternativeName>
        <fullName>Beta-globin</fullName>
    </alternativeName>
    <alternativeName>
        <fullName>Hemoglobin beta chain</fullName>
    </alternativeName>
</protein>
<proteinExistence type="evidence at protein level"/>
<keyword id="KW-0007">Acetylation</keyword>
<keyword id="KW-0903">Direct protein sequencing</keyword>
<keyword id="KW-0349">Heme</keyword>
<keyword id="KW-0408">Iron</keyword>
<keyword id="KW-0479">Metal-binding</keyword>
<keyword id="KW-0561">Oxygen transport</keyword>
<keyword id="KW-0597">Phosphoprotein</keyword>
<keyword id="KW-0702">S-nitrosylation</keyword>
<keyword id="KW-0813">Transport</keyword>
<comment type="function">
    <text>Involved in oxygen transport from the lung to the various peripheral tissues.</text>
</comment>
<comment type="subunit">
    <text>Heterotetramer of two alpha chains and two beta chains.</text>
</comment>
<comment type="tissue specificity">
    <text>Red blood cells.</text>
</comment>
<comment type="similarity">
    <text evidence="3">Belongs to the globin family.</text>
</comment>
<gene>
    <name type="primary">HBB</name>
</gene>